<proteinExistence type="inferred from homology"/>
<evidence type="ECO:0000255" key="1">
    <source>
        <dbReference type="HAMAP-Rule" id="MF_00588"/>
    </source>
</evidence>
<protein>
    <recommendedName>
        <fullName evidence="1">Glutamyl-tRNA(Gln) amidotransferase subunit E</fullName>
        <shortName evidence="1">Glu-ADT subunit E</shortName>
        <ecNumber evidence="1">6.3.5.-</ecNumber>
    </recommendedName>
</protein>
<dbReference type="EC" id="6.3.5.-" evidence="1"/>
<dbReference type="EMBL" id="CP001402">
    <property type="protein sequence ID" value="ACR41878.1"/>
    <property type="molecule type" value="Genomic_DNA"/>
</dbReference>
<dbReference type="RefSeq" id="WP_012711296.1">
    <property type="nucleotide sequence ID" value="NC_012726.1"/>
</dbReference>
<dbReference type="SMR" id="C4KH14"/>
<dbReference type="GeneID" id="7807501"/>
<dbReference type="GeneID" id="7941021"/>
<dbReference type="KEGG" id="sid:M164_1274"/>
<dbReference type="HOGENOM" id="CLU_030702_0_0_2"/>
<dbReference type="Proteomes" id="UP000001479">
    <property type="component" value="Chromosome"/>
</dbReference>
<dbReference type="GO" id="GO:0005737">
    <property type="term" value="C:cytoplasm"/>
    <property type="evidence" value="ECO:0007669"/>
    <property type="project" value="InterPro"/>
</dbReference>
<dbReference type="GO" id="GO:0004812">
    <property type="term" value="F:aminoacyl-tRNA ligase activity"/>
    <property type="evidence" value="ECO:0007669"/>
    <property type="project" value="InterPro"/>
</dbReference>
<dbReference type="GO" id="GO:0005524">
    <property type="term" value="F:ATP binding"/>
    <property type="evidence" value="ECO:0007669"/>
    <property type="project" value="UniProtKB-KW"/>
</dbReference>
<dbReference type="GO" id="GO:0050567">
    <property type="term" value="F:glutaminyl-tRNA synthase (glutamine-hydrolyzing) activity"/>
    <property type="evidence" value="ECO:0007669"/>
    <property type="project" value="UniProtKB-UniRule"/>
</dbReference>
<dbReference type="GO" id="GO:0070681">
    <property type="term" value="P:glutaminyl-tRNAGln biosynthesis via transamidation"/>
    <property type="evidence" value="ECO:0007669"/>
    <property type="project" value="TreeGrafter"/>
</dbReference>
<dbReference type="GO" id="GO:0006412">
    <property type="term" value="P:translation"/>
    <property type="evidence" value="ECO:0007669"/>
    <property type="project" value="UniProtKB-UniRule"/>
</dbReference>
<dbReference type="FunFam" id="1.10.150.380:FF:000002">
    <property type="entry name" value="Glutamyl-tRNA(Gln) amidotransferase subunit E"/>
    <property type="match status" value="1"/>
</dbReference>
<dbReference type="FunFam" id="3.30.1360.30:FF:000003">
    <property type="entry name" value="Glutamyl-tRNA(Gln) amidotransferase subunit E"/>
    <property type="match status" value="1"/>
</dbReference>
<dbReference type="Gene3D" id="1.10.10.410">
    <property type="match status" value="1"/>
</dbReference>
<dbReference type="Gene3D" id="3.30.1360.30">
    <property type="entry name" value="GAD-like domain"/>
    <property type="match status" value="1"/>
</dbReference>
<dbReference type="Gene3D" id="1.10.150.380">
    <property type="entry name" value="GatB domain, N-terminal subdomain"/>
    <property type="match status" value="1"/>
</dbReference>
<dbReference type="HAMAP" id="MF_00588">
    <property type="entry name" value="GatE"/>
    <property type="match status" value="1"/>
</dbReference>
<dbReference type="InterPro" id="IPR017959">
    <property type="entry name" value="Asn/Gln-tRNA_amidoTrfase_suB/E"/>
</dbReference>
<dbReference type="InterPro" id="IPR006075">
    <property type="entry name" value="Asn/Gln-tRNA_Trfase_suB/E_cat"/>
</dbReference>
<dbReference type="InterPro" id="IPR018027">
    <property type="entry name" value="Asn/Gln_amidotransferase"/>
</dbReference>
<dbReference type="InterPro" id="IPR003789">
    <property type="entry name" value="Asn/Gln_tRNA_amidoTrase-B-like"/>
</dbReference>
<dbReference type="InterPro" id="IPR004115">
    <property type="entry name" value="GAD-like_sf"/>
</dbReference>
<dbReference type="InterPro" id="IPR029351">
    <property type="entry name" value="GAD_dom"/>
</dbReference>
<dbReference type="InterPro" id="IPR042114">
    <property type="entry name" value="GatB_C_1"/>
</dbReference>
<dbReference type="InterPro" id="IPR023168">
    <property type="entry name" value="GatB_Yqey_C_2"/>
</dbReference>
<dbReference type="InterPro" id="IPR004414">
    <property type="entry name" value="GatE"/>
</dbReference>
<dbReference type="InterPro" id="IPR017958">
    <property type="entry name" value="Gln-tRNA_amidoTrfase_suB_CS"/>
</dbReference>
<dbReference type="InterPro" id="IPR014746">
    <property type="entry name" value="Gln_synth/guanido_kin_cat_dom"/>
</dbReference>
<dbReference type="NCBIfam" id="TIGR00134">
    <property type="entry name" value="gatE_arch"/>
    <property type="match status" value="1"/>
</dbReference>
<dbReference type="NCBIfam" id="NF003107">
    <property type="entry name" value="PRK04028.1"/>
    <property type="match status" value="1"/>
</dbReference>
<dbReference type="PANTHER" id="PTHR11659">
    <property type="entry name" value="GLUTAMYL-TRNA GLN AMIDOTRANSFERASE SUBUNIT B MITOCHONDRIAL AND PROKARYOTIC PET112-RELATED"/>
    <property type="match status" value="1"/>
</dbReference>
<dbReference type="PANTHER" id="PTHR11659:SF2">
    <property type="entry name" value="GLUTAMYL-TRNA(GLN) AMIDOTRANSFERASE SUBUNIT E"/>
    <property type="match status" value="1"/>
</dbReference>
<dbReference type="Pfam" id="PF02938">
    <property type="entry name" value="GAD"/>
    <property type="match status" value="1"/>
</dbReference>
<dbReference type="Pfam" id="PF02934">
    <property type="entry name" value="GatB_N"/>
    <property type="match status" value="1"/>
</dbReference>
<dbReference type="Pfam" id="PF02637">
    <property type="entry name" value="GatB_Yqey"/>
    <property type="match status" value="1"/>
</dbReference>
<dbReference type="SMART" id="SM00845">
    <property type="entry name" value="GatB_Yqey"/>
    <property type="match status" value="1"/>
</dbReference>
<dbReference type="SUPFAM" id="SSF55261">
    <property type="entry name" value="GAD domain-like"/>
    <property type="match status" value="1"/>
</dbReference>
<dbReference type="SUPFAM" id="SSF89095">
    <property type="entry name" value="GatB/YqeY motif"/>
    <property type="match status" value="1"/>
</dbReference>
<dbReference type="SUPFAM" id="SSF55931">
    <property type="entry name" value="Glutamine synthetase/guanido kinase"/>
    <property type="match status" value="1"/>
</dbReference>
<dbReference type="PROSITE" id="PS01234">
    <property type="entry name" value="GATB"/>
    <property type="match status" value="1"/>
</dbReference>
<gene>
    <name evidence="1" type="primary">gatE</name>
    <name type="ordered locus">M164_1274</name>
</gene>
<keyword id="KW-0067">ATP-binding</keyword>
<keyword id="KW-0436">Ligase</keyword>
<keyword id="KW-0547">Nucleotide-binding</keyword>
<keyword id="KW-0648">Protein biosynthesis</keyword>
<comment type="function">
    <text evidence="1">Allows the formation of correctly charged Gln-tRNA(Gln) through the transamidation of misacylated Glu-tRNA(Gln) in organisms which lack glutaminyl-tRNA synthetase. The reaction takes place in the presence of glutamine and ATP through an activated gamma-phospho-Glu-tRNA(Gln). The GatDE system is specific for glutamate and does not act on aspartate.</text>
</comment>
<comment type="catalytic activity">
    <reaction evidence="1">
        <text>L-glutamyl-tRNA(Gln) + L-glutamine + ATP + H2O = L-glutaminyl-tRNA(Gln) + L-glutamate + ADP + phosphate + H(+)</text>
        <dbReference type="Rhea" id="RHEA:17521"/>
        <dbReference type="Rhea" id="RHEA-COMP:9681"/>
        <dbReference type="Rhea" id="RHEA-COMP:9684"/>
        <dbReference type="ChEBI" id="CHEBI:15377"/>
        <dbReference type="ChEBI" id="CHEBI:15378"/>
        <dbReference type="ChEBI" id="CHEBI:29985"/>
        <dbReference type="ChEBI" id="CHEBI:30616"/>
        <dbReference type="ChEBI" id="CHEBI:43474"/>
        <dbReference type="ChEBI" id="CHEBI:58359"/>
        <dbReference type="ChEBI" id="CHEBI:78520"/>
        <dbReference type="ChEBI" id="CHEBI:78521"/>
        <dbReference type="ChEBI" id="CHEBI:456216"/>
    </reaction>
</comment>
<comment type="subunit">
    <text evidence="1">Heterodimer of GatD and GatE.</text>
</comment>
<comment type="similarity">
    <text evidence="1">Belongs to the GatB/GatE family. GatE subfamily.</text>
</comment>
<accession>C4KH14</accession>
<name>GATE_SACI6</name>
<feature type="chain" id="PRO_1000212157" description="Glutamyl-tRNA(Gln) amidotransferase subunit E">
    <location>
        <begin position="1"/>
        <end position="633"/>
    </location>
</feature>
<reference key="1">
    <citation type="journal article" date="2009" name="Proc. Natl. Acad. Sci. U.S.A.">
        <title>Biogeography of the Sulfolobus islandicus pan-genome.</title>
        <authorList>
            <person name="Reno M.L."/>
            <person name="Held N.L."/>
            <person name="Fields C.J."/>
            <person name="Burke P.V."/>
            <person name="Whitaker R.J."/>
        </authorList>
    </citation>
    <scope>NUCLEOTIDE SEQUENCE [LARGE SCALE GENOMIC DNA]</scope>
    <source>
        <strain>M.16.4 / Kamchatka #3</strain>
    </source>
</reference>
<sequence length="633" mass="71528">MSELNYEELGLKVGLEIHQQLNTSHKLFCNCSTNLKEDYKLTLERYLRPALSELGEVDVAALFEWKKGKKYVYRIPITTSCLVEADEEPPHAINEEALKIALAIAIALNSNIVDEIYVMRKIVIDGSNTTGFQRTAIVALGGMLKDEGVTIQTIAVEEDAARKIDERTDQVTYSLDRLGIPLIEISTGPDIRSPEQAERVALKIGQLLRMTGKVKRGIGTIRQDLNISIKGGTKIEIKGVQKLELIPDIVRYEAMRQFNLLKIKEELNKRGVSKNLILSNFVVKDLTELFKNTNSKIIKSGIEKGGLVYGIRAYKLKGILGWELIPKKRRFGTEIADYVRALAELGGLFHSDELPNYGITEEEINKVREALNATTEDGFILIVGERERLDKAVEVIRDRILLAFDGIPKETRGALDDGTTKFLRPQPSSARMYPETDIPPRRIDEKLLEDAKKFVPESPESKMKRYITLGLSEELAKEIIRDPRLDLFEELVNKYSPKVSPVVIASTITNTLKYVKSKGGDISKINEEDIEELIKSVYENKISKDSISEILLEYTTNKNVELKDVIRKYEALPTEELEKIIDDVISSNLDEIRKRKDKAVNLIMSKVMSKVKGRAEGKVILELIKSRLKNVME</sequence>
<organism>
    <name type="scientific">Saccharolobus islandicus (strain M.16.4 / Kamchatka #3)</name>
    <name type="common">Sulfolobus islandicus</name>
    <dbReference type="NCBI Taxonomy" id="426118"/>
    <lineage>
        <taxon>Archaea</taxon>
        <taxon>Thermoproteota</taxon>
        <taxon>Thermoprotei</taxon>
        <taxon>Sulfolobales</taxon>
        <taxon>Sulfolobaceae</taxon>
        <taxon>Saccharolobus</taxon>
    </lineage>
</organism>